<sequence length="188" mass="21915">MKHKVGILGGTFDPPHLAHLQMAEVAKQQLNLEKVLFLPNKIPPHKHISGMASNDARVEMLRLMIEGIDYFEVDLRELKRAGKSYTYDTMRDMISEQPNTDFYFIIGGDMVEYLPKWYHIEDLVKMVTFVGVHRPHYQAEVPYDVVNIDMPETTISSTEIRNNIEHAEAFLPEKVWLYIKEHQLYGKK</sequence>
<feature type="chain" id="PRO_0000310123" description="Probable nicotinate-nucleotide adenylyltransferase">
    <location>
        <begin position="1"/>
        <end position="188"/>
    </location>
</feature>
<comment type="function">
    <text evidence="1">Catalyzes the reversible adenylation of nicotinate mononucleotide (NaMN) to nicotinic acid adenine dinucleotide (NaAD).</text>
</comment>
<comment type="catalytic activity">
    <reaction evidence="1">
        <text>nicotinate beta-D-ribonucleotide + ATP + H(+) = deamido-NAD(+) + diphosphate</text>
        <dbReference type="Rhea" id="RHEA:22860"/>
        <dbReference type="ChEBI" id="CHEBI:15378"/>
        <dbReference type="ChEBI" id="CHEBI:30616"/>
        <dbReference type="ChEBI" id="CHEBI:33019"/>
        <dbReference type="ChEBI" id="CHEBI:57502"/>
        <dbReference type="ChEBI" id="CHEBI:58437"/>
        <dbReference type="EC" id="2.7.7.18"/>
    </reaction>
</comment>
<comment type="pathway">
    <text evidence="1">Cofactor biosynthesis; NAD(+) biosynthesis; deamido-NAD(+) from nicotinate D-ribonucleotide: step 1/1.</text>
</comment>
<comment type="similarity">
    <text evidence="1">Belongs to the NadD family.</text>
</comment>
<dbReference type="EC" id="2.7.7.18" evidence="1"/>
<dbReference type="EMBL" id="AM263198">
    <property type="protein sequence ID" value="CAK20919.1"/>
    <property type="molecule type" value="Genomic_DNA"/>
</dbReference>
<dbReference type="RefSeq" id="WP_011702291.1">
    <property type="nucleotide sequence ID" value="NC_008555.1"/>
</dbReference>
<dbReference type="SMR" id="A0AIT7"/>
<dbReference type="STRING" id="386043.lwe1501"/>
<dbReference type="GeneID" id="61189377"/>
<dbReference type="KEGG" id="lwe:lwe1501"/>
<dbReference type="eggNOG" id="COG1057">
    <property type="taxonomic scope" value="Bacteria"/>
</dbReference>
<dbReference type="HOGENOM" id="CLU_069765_3_1_9"/>
<dbReference type="OrthoDB" id="5295945at2"/>
<dbReference type="UniPathway" id="UPA00253">
    <property type="reaction ID" value="UER00332"/>
</dbReference>
<dbReference type="Proteomes" id="UP000000779">
    <property type="component" value="Chromosome"/>
</dbReference>
<dbReference type="GO" id="GO:0005524">
    <property type="term" value="F:ATP binding"/>
    <property type="evidence" value="ECO:0007669"/>
    <property type="project" value="UniProtKB-KW"/>
</dbReference>
<dbReference type="GO" id="GO:0004515">
    <property type="term" value="F:nicotinate-nucleotide adenylyltransferase activity"/>
    <property type="evidence" value="ECO:0007669"/>
    <property type="project" value="UniProtKB-UniRule"/>
</dbReference>
<dbReference type="GO" id="GO:0009435">
    <property type="term" value="P:NAD biosynthetic process"/>
    <property type="evidence" value="ECO:0007669"/>
    <property type="project" value="UniProtKB-UniRule"/>
</dbReference>
<dbReference type="CDD" id="cd02165">
    <property type="entry name" value="NMNAT"/>
    <property type="match status" value="1"/>
</dbReference>
<dbReference type="FunFam" id="3.40.50.620:FF:000079">
    <property type="entry name" value="Probable nicotinate-nucleotide adenylyltransferase"/>
    <property type="match status" value="1"/>
</dbReference>
<dbReference type="Gene3D" id="3.40.50.620">
    <property type="entry name" value="HUPs"/>
    <property type="match status" value="1"/>
</dbReference>
<dbReference type="HAMAP" id="MF_00244">
    <property type="entry name" value="NaMN_adenylyltr"/>
    <property type="match status" value="1"/>
</dbReference>
<dbReference type="InterPro" id="IPR004821">
    <property type="entry name" value="Cyt_trans-like"/>
</dbReference>
<dbReference type="InterPro" id="IPR005248">
    <property type="entry name" value="NadD/NMNAT"/>
</dbReference>
<dbReference type="InterPro" id="IPR014729">
    <property type="entry name" value="Rossmann-like_a/b/a_fold"/>
</dbReference>
<dbReference type="NCBIfam" id="TIGR00125">
    <property type="entry name" value="cyt_tran_rel"/>
    <property type="match status" value="1"/>
</dbReference>
<dbReference type="NCBIfam" id="TIGR00482">
    <property type="entry name" value="nicotinate (nicotinamide) nucleotide adenylyltransferase"/>
    <property type="match status" value="1"/>
</dbReference>
<dbReference type="NCBIfam" id="NF000840">
    <property type="entry name" value="PRK00071.1-3"/>
    <property type="match status" value="1"/>
</dbReference>
<dbReference type="NCBIfam" id="NF000841">
    <property type="entry name" value="PRK00071.1-4"/>
    <property type="match status" value="1"/>
</dbReference>
<dbReference type="PANTHER" id="PTHR39321">
    <property type="entry name" value="NICOTINATE-NUCLEOTIDE ADENYLYLTRANSFERASE-RELATED"/>
    <property type="match status" value="1"/>
</dbReference>
<dbReference type="PANTHER" id="PTHR39321:SF3">
    <property type="entry name" value="PHOSPHOPANTETHEINE ADENYLYLTRANSFERASE"/>
    <property type="match status" value="1"/>
</dbReference>
<dbReference type="Pfam" id="PF01467">
    <property type="entry name" value="CTP_transf_like"/>
    <property type="match status" value="1"/>
</dbReference>
<dbReference type="SUPFAM" id="SSF52374">
    <property type="entry name" value="Nucleotidylyl transferase"/>
    <property type="match status" value="1"/>
</dbReference>
<gene>
    <name evidence="1" type="primary">nadD</name>
    <name type="ordered locus">lwe1501</name>
</gene>
<reference key="1">
    <citation type="journal article" date="2006" name="J. Bacteriol.">
        <title>Whole-genome sequence of Listeria welshimeri reveals common steps in genome reduction with Listeria innocua as compared to Listeria monocytogenes.</title>
        <authorList>
            <person name="Hain T."/>
            <person name="Steinweg C."/>
            <person name="Kuenne C.T."/>
            <person name="Billion A."/>
            <person name="Ghai R."/>
            <person name="Chatterjee S.S."/>
            <person name="Domann E."/>
            <person name="Kaerst U."/>
            <person name="Goesmann A."/>
            <person name="Bekel T."/>
            <person name="Bartels D."/>
            <person name="Kaiser O."/>
            <person name="Meyer F."/>
            <person name="Puehler A."/>
            <person name="Weisshaar B."/>
            <person name="Wehland J."/>
            <person name="Liang C."/>
            <person name="Dandekar T."/>
            <person name="Lampidis R."/>
            <person name="Kreft J."/>
            <person name="Goebel W."/>
            <person name="Chakraborty T."/>
        </authorList>
    </citation>
    <scope>NUCLEOTIDE SEQUENCE [LARGE SCALE GENOMIC DNA]</scope>
    <source>
        <strain>ATCC 35897 / DSM 20650 / CCUG 15529 / CIP 8149 / NCTC 11857 / SLCC 5334 / V8</strain>
    </source>
</reference>
<name>NADD_LISW6</name>
<evidence type="ECO:0000255" key="1">
    <source>
        <dbReference type="HAMAP-Rule" id="MF_00244"/>
    </source>
</evidence>
<organism>
    <name type="scientific">Listeria welshimeri serovar 6b (strain ATCC 35897 / DSM 20650 / CCUG 15529 / CIP 8149 / NCTC 11857 / SLCC 5334 / V8)</name>
    <dbReference type="NCBI Taxonomy" id="386043"/>
    <lineage>
        <taxon>Bacteria</taxon>
        <taxon>Bacillati</taxon>
        <taxon>Bacillota</taxon>
        <taxon>Bacilli</taxon>
        <taxon>Bacillales</taxon>
        <taxon>Listeriaceae</taxon>
        <taxon>Listeria</taxon>
    </lineage>
</organism>
<keyword id="KW-0067">ATP-binding</keyword>
<keyword id="KW-0520">NAD</keyword>
<keyword id="KW-0547">Nucleotide-binding</keyword>
<keyword id="KW-0548">Nucleotidyltransferase</keyword>
<keyword id="KW-0662">Pyridine nucleotide biosynthesis</keyword>
<keyword id="KW-0808">Transferase</keyword>
<accession>A0AIT7</accession>
<protein>
    <recommendedName>
        <fullName evidence="1">Probable nicotinate-nucleotide adenylyltransferase</fullName>
        <ecNumber evidence="1">2.7.7.18</ecNumber>
    </recommendedName>
    <alternativeName>
        <fullName evidence="1">Deamido-NAD(+) diphosphorylase</fullName>
    </alternativeName>
    <alternativeName>
        <fullName evidence="1">Deamido-NAD(+) pyrophosphorylase</fullName>
    </alternativeName>
    <alternativeName>
        <fullName evidence="1">Nicotinate mononucleotide adenylyltransferase</fullName>
        <shortName evidence="1">NaMN adenylyltransferase</shortName>
    </alternativeName>
</protein>
<proteinExistence type="inferred from homology"/>